<comment type="function">
    <text evidence="1">This protein binds to 23S rRNA in the presence of protein L20.</text>
</comment>
<comment type="subunit">
    <text evidence="1">Part of the 50S ribosomal subunit. Contacts protein L20.</text>
</comment>
<comment type="similarity">
    <text evidence="1">Belongs to the bacterial ribosomal protein bL21 family.</text>
</comment>
<organism>
    <name type="scientific">Francisella philomiragia subsp. philomiragia (strain ATCC 25017 / CCUG 19701 / FSC 153 / O#319-036)</name>
    <dbReference type="NCBI Taxonomy" id="484022"/>
    <lineage>
        <taxon>Bacteria</taxon>
        <taxon>Pseudomonadati</taxon>
        <taxon>Pseudomonadota</taxon>
        <taxon>Gammaproteobacteria</taxon>
        <taxon>Thiotrichales</taxon>
        <taxon>Francisellaceae</taxon>
        <taxon>Francisella</taxon>
    </lineage>
</organism>
<gene>
    <name evidence="1" type="primary">rplU</name>
    <name type="ordered locus">Fphi_0146</name>
</gene>
<feature type="chain" id="PRO_1000086981" description="Large ribosomal subunit protein bL21">
    <location>
        <begin position="1"/>
        <end position="104"/>
    </location>
</feature>
<accession>B0TYK2</accession>
<protein>
    <recommendedName>
        <fullName evidence="1">Large ribosomal subunit protein bL21</fullName>
    </recommendedName>
    <alternativeName>
        <fullName evidence="2">50S ribosomal protein L21</fullName>
    </alternativeName>
</protein>
<evidence type="ECO:0000255" key="1">
    <source>
        <dbReference type="HAMAP-Rule" id="MF_01363"/>
    </source>
</evidence>
<evidence type="ECO:0000305" key="2"/>
<keyword id="KW-0687">Ribonucleoprotein</keyword>
<keyword id="KW-0689">Ribosomal protein</keyword>
<keyword id="KW-0694">RNA-binding</keyword>
<keyword id="KW-0699">rRNA-binding</keyword>
<proteinExistence type="inferred from homology"/>
<dbReference type="EMBL" id="CP000937">
    <property type="protein sequence ID" value="ABZ86367.1"/>
    <property type="molecule type" value="Genomic_DNA"/>
</dbReference>
<dbReference type="SMR" id="B0TYK2"/>
<dbReference type="KEGG" id="fph:Fphi_0146"/>
<dbReference type="eggNOG" id="COG0261">
    <property type="taxonomic scope" value="Bacteria"/>
</dbReference>
<dbReference type="HOGENOM" id="CLU_061463_3_2_6"/>
<dbReference type="GO" id="GO:0005737">
    <property type="term" value="C:cytoplasm"/>
    <property type="evidence" value="ECO:0007669"/>
    <property type="project" value="UniProtKB-ARBA"/>
</dbReference>
<dbReference type="GO" id="GO:1990904">
    <property type="term" value="C:ribonucleoprotein complex"/>
    <property type="evidence" value="ECO:0007669"/>
    <property type="project" value="UniProtKB-KW"/>
</dbReference>
<dbReference type="GO" id="GO:0005840">
    <property type="term" value="C:ribosome"/>
    <property type="evidence" value="ECO:0007669"/>
    <property type="project" value="UniProtKB-KW"/>
</dbReference>
<dbReference type="GO" id="GO:0019843">
    <property type="term" value="F:rRNA binding"/>
    <property type="evidence" value="ECO:0007669"/>
    <property type="project" value="UniProtKB-UniRule"/>
</dbReference>
<dbReference type="GO" id="GO:0003735">
    <property type="term" value="F:structural constituent of ribosome"/>
    <property type="evidence" value="ECO:0007669"/>
    <property type="project" value="InterPro"/>
</dbReference>
<dbReference type="GO" id="GO:0006412">
    <property type="term" value="P:translation"/>
    <property type="evidence" value="ECO:0007669"/>
    <property type="project" value="UniProtKB-UniRule"/>
</dbReference>
<dbReference type="HAMAP" id="MF_01363">
    <property type="entry name" value="Ribosomal_bL21"/>
    <property type="match status" value="1"/>
</dbReference>
<dbReference type="InterPro" id="IPR028909">
    <property type="entry name" value="bL21-like"/>
</dbReference>
<dbReference type="InterPro" id="IPR036164">
    <property type="entry name" value="bL21-like_sf"/>
</dbReference>
<dbReference type="InterPro" id="IPR001787">
    <property type="entry name" value="Ribosomal_bL21"/>
</dbReference>
<dbReference type="InterPro" id="IPR018258">
    <property type="entry name" value="Ribosomal_bL21_CS"/>
</dbReference>
<dbReference type="NCBIfam" id="TIGR00061">
    <property type="entry name" value="L21"/>
    <property type="match status" value="1"/>
</dbReference>
<dbReference type="PANTHER" id="PTHR21349">
    <property type="entry name" value="50S RIBOSOMAL PROTEIN L21"/>
    <property type="match status" value="1"/>
</dbReference>
<dbReference type="PANTHER" id="PTHR21349:SF0">
    <property type="entry name" value="LARGE RIBOSOMAL SUBUNIT PROTEIN BL21M"/>
    <property type="match status" value="1"/>
</dbReference>
<dbReference type="Pfam" id="PF00829">
    <property type="entry name" value="Ribosomal_L21p"/>
    <property type="match status" value="1"/>
</dbReference>
<dbReference type="SUPFAM" id="SSF141091">
    <property type="entry name" value="L21p-like"/>
    <property type="match status" value="1"/>
</dbReference>
<dbReference type="PROSITE" id="PS01169">
    <property type="entry name" value="RIBOSOMAL_L21"/>
    <property type="match status" value="1"/>
</dbReference>
<name>RL21_FRAP2</name>
<sequence length="104" mass="11667">MYAIIKNGGKQYKVKEGEVVKLEKFDLGIGEKVEFDTVLMGQTAEGEVKIGAPIVEGAKVVGEVVEQGRNKKVKIMKFRRRKHSMKQQGHRQYFTAVKVSSISL</sequence>
<reference key="1">
    <citation type="submission" date="2007-12" db="EMBL/GenBank/DDBJ databases">
        <title>Complete sequence of chromosome of Francisella philomiragia subsp. philomiragia ATCC 25017.</title>
        <authorList>
            <consortium name="US DOE Joint Genome Institute"/>
            <person name="Copeland A."/>
            <person name="Lucas S."/>
            <person name="Lapidus A."/>
            <person name="Barry K."/>
            <person name="Detter J.C."/>
            <person name="Glavina del Rio T."/>
            <person name="Hammon N."/>
            <person name="Israni S."/>
            <person name="Dalin E."/>
            <person name="Tice H."/>
            <person name="Pitluck S."/>
            <person name="Chain P."/>
            <person name="Malfatti S."/>
            <person name="Shin M."/>
            <person name="Vergez L."/>
            <person name="Schmutz J."/>
            <person name="Larimer F."/>
            <person name="Land M."/>
            <person name="Hauser L."/>
            <person name="Richardson P."/>
        </authorList>
    </citation>
    <scope>NUCLEOTIDE SEQUENCE [LARGE SCALE GENOMIC DNA]</scope>
    <source>
        <strain>ATCC 25017 / CCUG 19701 / FSC 153 / O#319-036</strain>
    </source>
</reference>